<sequence>MAVPKRKTTPSKRGMRRSADALKQPAYVENPDSGELHRPHHVDLKSGMYRGKQILKPKGE</sequence>
<evidence type="ECO:0000255" key="1">
    <source>
        <dbReference type="HAMAP-Rule" id="MF_00340"/>
    </source>
</evidence>
<evidence type="ECO:0000256" key="2">
    <source>
        <dbReference type="SAM" id="MobiDB-lite"/>
    </source>
</evidence>
<evidence type="ECO:0000305" key="3"/>
<keyword id="KW-1185">Reference proteome</keyword>
<keyword id="KW-0687">Ribonucleoprotein</keyword>
<keyword id="KW-0689">Ribosomal protein</keyword>
<accession>A7HTE5</accession>
<proteinExistence type="inferred from homology"/>
<protein>
    <recommendedName>
        <fullName evidence="1">Large ribosomal subunit protein bL32</fullName>
    </recommendedName>
    <alternativeName>
        <fullName evidence="3">50S ribosomal protein L32</fullName>
    </alternativeName>
</protein>
<feature type="chain" id="PRO_1000072064" description="Large ribosomal subunit protein bL32">
    <location>
        <begin position="1"/>
        <end position="60"/>
    </location>
</feature>
<feature type="region of interest" description="Disordered" evidence="2">
    <location>
        <begin position="1"/>
        <end position="60"/>
    </location>
</feature>
<feature type="compositionally biased region" description="Basic residues" evidence="2">
    <location>
        <begin position="1"/>
        <end position="16"/>
    </location>
</feature>
<feature type="compositionally biased region" description="Basic and acidic residues" evidence="2">
    <location>
        <begin position="34"/>
        <end position="44"/>
    </location>
</feature>
<comment type="similarity">
    <text evidence="1">Belongs to the bacterial ribosomal protein bL32 family.</text>
</comment>
<gene>
    <name evidence="1" type="primary">rpmF</name>
    <name type="ordered locus">Plav_1559</name>
</gene>
<name>RL32_PARL1</name>
<dbReference type="EMBL" id="CP000774">
    <property type="protein sequence ID" value="ABS63178.1"/>
    <property type="molecule type" value="Genomic_DNA"/>
</dbReference>
<dbReference type="RefSeq" id="WP_012110466.1">
    <property type="nucleotide sequence ID" value="NC_009719.1"/>
</dbReference>
<dbReference type="SMR" id="A7HTE5"/>
<dbReference type="STRING" id="402881.Plav_1559"/>
<dbReference type="KEGG" id="pla:Plav_1559"/>
<dbReference type="eggNOG" id="COG0333">
    <property type="taxonomic scope" value="Bacteria"/>
</dbReference>
<dbReference type="HOGENOM" id="CLU_129084_2_2_5"/>
<dbReference type="OrthoDB" id="9801927at2"/>
<dbReference type="Proteomes" id="UP000006377">
    <property type="component" value="Chromosome"/>
</dbReference>
<dbReference type="GO" id="GO:0015934">
    <property type="term" value="C:large ribosomal subunit"/>
    <property type="evidence" value="ECO:0007669"/>
    <property type="project" value="InterPro"/>
</dbReference>
<dbReference type="GO" id="GO:0003735">
    <property type="term" value="F:structural constituent of ribosome"/>
    <property type="evidence" value="ECO:0007669"/>
    <property type="project" value="InterPro"/>
</dbReference>
<dbReference type="GO" id="GO:0006412">
    <property type="term" value="P:translation"/>
    <property type="evidence" value="ECO:0007669"/>
    <property type="project" value="UniProtKB-UniRule"/>
</dbReference>
<dbReference type="Gene3D" id="1.20.5.640">
    <property type="entry name" value="Single helix bin"/>
    <property type="match status" value="1"/>
</dbReference>
<dbReference type="HAMAP" id="MF_00340">
    <property type="entry name" value="Ribosomal_bL32"/>
    <property type="match status" value="1"/>
</dbReference>
<dbReference type="InterPro" id="IPR002677">
    <property type="entry name" value="Ribosomal_bL32"/>
</dbReference>
<dbReference type="InterPro" id="IPR044957">
    <property type="entry name" value="Ribosomal_bL32_bact"/>
</dbReference>
<dbReference type="InterPro" id="IPR011332">
    <property type="entry name" value="Ribosomal_zn-bd"/>
</dbReference>
<dbReference type="NCBIfam" id="TIGR01031">
    <property type="entry name" value="rpmF_bact"/>
    <property type="match status" value="1"/>
</dbReference>
<dbReference type="PANTHER" id="PTHR35534">
    <property type="entry name" value="50S RIBOSOMAL PROTEIN L32"/>
    <property type="match status" value="1"/>
</dbReference>
<dbReference type="PANTHER" id="PTHR35534:SF1">
    <property type="entry name" value="LARGE RIBOSOMAL SUBUNIT PROTEIN BL32"/>
    <property type="match status" value="1"/>
</dbReference>
<dbReference type="Pfam" id="PF01783">
    <property type="entry name" value="Ribosomal_L32p"/>
    <property type="match status" value="1"/>
</dbReference>
<dbReference type="SUPFAM" id="SSF57829">
    <property type="entry name" value="Zn-binding ribosomal proteins"/>
    <property type="match status" value="1"/>
</dbReference>
<reference key="1">
    <citation type="journal article" date="2011" name="Stand. Genomic Sci.">
        <title>Complete genome sequence of Parvibaculum lavamentivorans type strain (DS-1(T)).</title>
        <authorList>
            <person name="Schleheck D."/>
            <person name="Weiss M."/>
            <person name="Pitluck S."/>
            <person name="Bruce D."/>
            <person name="Land M.L."/>
            <person name="Han S."/>
            <person name="Saunders E."/>
            <person name="Tapia R."/>
            <person name="Detter C."/>
            <person name="Brettin T."/>
            <person name="Han J."/>
            <person name="Woyke T."/>
            <person name="Goodwin L."/>
            <person name="Pennacchio L."/>
            <person name="Nolan M."/>
            <person name="Cook A.M."/>
            <person name="Kjelleberg S."/>
            <person name="Thomas T."/>
        </authorList>
    </citation>
    <scope>NUCLEOTIDE SEQUENCE [LARGE SCALE GENOMIC DNA]</scope>
    <source>
        <strain>DS-1 / DSM 13023 / NCIMB 13966</strain>
    </source>
</reference>
<organism>
    <name type="scientific">Parvibaculum lavamentivorans (strain DS-1 / DSM 13023 / NCIMB 13966)</name>
    <dbReference type="NCBI Taxonomy" id="402881"/>
    <lineage>
        <taxon>Bacteria</taxon>
        <taxon>Pseudomonadati</taxon>
        <taxon>Pseudomonadota</taxon>
        <taxon>Alphaproteobacteria</taxon>
        <taxon>Hyphomicrobiales</taxon>
        <taxon>Parvibaculaceae</taxon>
        <taxon>Parvibaculum</taxon>
    </lineage>
</organism>